<gene>
    <name type="primary">SERPINB14</name>
</gene>
<proteinExistence type="evidence at transcript level"/>
<dbReference type="EMBL" id="AY354922">
    <property type="protein sequence ID" value="AAQ22769.1"/>
    <property type="molecule type" value="mRNA"/>
</dbReference>
<dbReference type="SASBDB" id="Q6V115"/>
<dbReference type="SMR" id="Q6V115"/>
<dbReference type="MEROPS" id="I04.958"/>
<dbReference type="GlyCosmos" id="Q6V115">
    <property type="glycosylation" value="2 sites, No reported glycans"/>
</dbReference>
<dbReference type="GO" id="GO:0005615">
    <property type="term" value="C:extracellular space"/>
    <property type="evidence" value="ECO:0007669"/>
    <property type="project" value="InterPro"/>
</dbReference>
<dbReference type="GO" id="GO:0004867">
    <property type="term" value="F:serine-type endopeptidase inhibitor activity"/>
    <property type="evidence" value="ECO:0007669"/>
    <property type="project" value="InterPro"/>
</dbReference>
<dbReference type="CDD" id="cd02059">
    <property type="entry name" value="serpinB14_OVA"/>
    <property type="match status" value="1"/>
</dbReference>
<dbReference type="FunFam" id="2.30.39.10:FF:000001">
    <property type="entry name" value="Serpin family B member 2"/>
    <property type="match status" value="1"/>
</dbReference>
<dbReference type="Gene3D" id="2.30.39.10">
    <property type="entry name" value="Alpha-1-antitrypsin, domain 1"/>
    <property type="match status" value="1"/>
</dbReference>
<dbReference type="Gene3D" id="3.30.497.10">
    <property type="entry name" value="Antithrombin, subunit I, domain 2"/>
    <property type="match status" value="1"/>
</dbReference>
<dbReference type="InterPro" id="IPR023795">
    <property type="entry name" value="Serpin_CS"/>
</dbReference>
<dbReference type="InterPro" id="IPR023796">
    <property type="entry name" value="Serpin_dom"/>
</dbReference>
<dbReference type="InterPro" id="IPR000215">
    <property type="entry name" value="Serpin_fam"/>
</dbReference>
<dbReference type="InterPro" id="IPR036186">
    <property type="entry name" value="Serpin_sf"/>
</dbReference>
<dbReference type="InterPro" id="IPR042178">
    <property type="entry name" value="Serpin_sf_1"/>
</dbReference>
<dbReference type="InterPro" id="IPR042185">
    <property type="entry name" value="Serpin_sf_2"/>
</dbReference>
<dbReference type="PANTHER" id="PTHR11461">
    <property type="entry name" value="SERINE PROTEASE INHIBITOR, SERPIN"/>
    <property type="match status" value="1"/>
</dbReference>
<dbReference type="PANTHER" id="PTHR11461:SF186">
    <property type="entry name" value="SERPIN B4"/>
    <property type="match status" value="1"/>
</dbReference>
<dbReference type="Pfam" id="PF00079">
    <property type="entry name" value="Serpin"/>
    <property type="match status" value="1"/>
</dbReference>
<dbReference type="SMART" id="SM00093">
    <property type="entry name" value="SERPIN"/>
    <property type="match status" value="1"/>
</dbReference>
<dbReference type="SUPFAM" id="SSF56574">
    <property type="entry name" value="Serpins"/>
    <property type="match status" value="1"/>
</dbReference>
<dbReference type="PROSITE" id="PS00284">
    <property type="entry name" value="SERPIN"/>
    <property type="match status" value="1"/>
</dbReference>
<comment type="function">
    <text evidence="1">Storage protein of egg white. Lack protease inhibitory activity (By similarity).</text>
</comment>
<comment type="subcellular location">
    <subcellularLocation>
        <location evidence="1">Secreted</location>
    </subcellularLocation>
</comment>
<comment type="tissue specificity">
    <text>Major protein of egg white.</text>
</comment>
<comment type="PTM">
    <text evidence="1">The signal sequence is not cleaved. The functional signal for membrane translocation of ovalbumin becomes accessible when the nascent chain is 50 to 60 residues long. The hydrophobic sequence which lies between residues 27 and 43 folds back on the preceding residues to form an amphipathic hairpin structure which is the signal element recognized by the membrane (By similarity).</text>
</comment>
<comment type="similarity">
    <text evidence="3">Belongs to the serpin family. Ov-serpin subfamily.</text>
</comment>
<sequence>MGSIGAASMEFCFDVFKELKVHHANDNMLYSPFAILSTLAMVFLGAKDSTRTQINKVVHFDKLPGFGDSIEAQCGTSANVHSSLRDILNQITKQNDAYSFSLASRLYAQETYTVVPEYLQCVKELYRGGLESVNFQTAADQARGLINAWVESQTNGIIRNILQPSSVDSQTAMVLVNAIAFKGLWEKAFKAEDTQTIPFRVTEQESKPVQMMHQIGSFKVASMASEKMKILELPFASGTMSMLVLLPDDVSGLEQLESTISFEKLTEWTSSSIMEERKVKVYLPRMKMEEKYNLTSLLMAMGITDLFSSSANLSGISSVGSLKIPQAVHAAYAEINEAGRDVVGSAEAGVDATEEFRADHPFLFCVKHIETNAILLFGRCVSP</sequence>
<organism>
    <name type="scientific">Coturnix coturnix</name>
    <name type="common">Common quail</name>
    <name type="synonym">Tetrao coturnix</name>
    <dbReference type="NCBI Taxonomy" id="9091"/>
    <lineage>
        <taxon>Eukaryota</taxon>
        <taxon>Metazoa</taxon>
        <taxon>Chordata</taxon>
        <taxon>Craniata</taxon>
        <taxon>Vertebrata</taxon>
        <taxon>Euteleostomi</taxon>
        <taxon>Archelosauria</taxon>
        <taxon>Archosauria</taxon>
        <taxon>Dinosauria</taxon>
        <taxon>Saurischia</taxon>
        <taxon>Theropoda</taxon>
        <taxon>Coelurosauria</taxon>
        <taxon>Aves</taxon>
        <taxon>Neognathae</taxon>
        <taxon>Galloanserae</taxon>
        <taxon>Galliformes</taxon>
        <taxon>Phasianidae</taxon>
        <taxon>Perdicinae</taxon>
        <taxon>Coturnix</taxon>
    </lineage>
</organism>
<reference key="1">
    <citation type="submission" date="2003-07" db="EMBL/GenBank/DDBJ databases">
        <authorList>
            <person name="Chen G."/>
            <person name="Yu X.C."/>
            <person name="Jiang H.Z."/>
            <person name="Li M.G."/>
        </authorList>
    </citation>
    <scope>NUCLEOTIDE SEQUENCE [MRNA]</scope>
</reference>
<protein>
    <recommendedName>
        <fullName>Ovalbumin</fullName>
    </recommendedName>
    <alternativeName>
        <fullName>Egg albumin</fullName>
    </alternativeName>
</protein>
<name>OVAL_COTCO</name>
<keyword id="KW-0007">Acetylation</keyword>
<keyword id="KW-1015">Disulfide bond</keyword>
<keyword id="KW-0325">Glycoprotein</keyword>
<keyword id="KW-0597">Phosphoprotein</keyword>
<keyword id="KW-0964">Secreted</keyword>
<keyword id="KW-0732">Signal</keyword>
<accession>Q6V115</accession>
<evidence type="ECO:0000250" key="1"/>
<evidence type="ECO:0000255" key="2"/>
<evidence type="ECO:0000305" key="3"/>
<feature type="initiator methionine" description="Removed" evidence="1">
    <location>
        <position position="1"/>
    </location>
</feature>
<feature type="chain" id="PRO_0000094127" description="Ovalbumin">
    <location>
        <begin position="2"/>
        <end position="383"/>
    </location>
</feature>
<feature type="signal peptide" description="Not cleaved" evidence="1">
    <location>
        <begin position="22"/>
        <end position="48"/>
    </location>
</feature>
<feature type="site" description="Reactive bond homolog">
    <location>
        <begin position="353"/>
        <end position="354"/>
    </location>
</feature>
<feature type="modified residue" description="N-acetylglycine" evidence="1">
    <location>
        <position position="2"/>
    </location>
</feature>
<feature type="modified residue" description="Phosphoserine" evidence="1">
    <location>
        <position position="69"/>
    </location>
</feature>
<feature type="modified residue" description="Phosphoserine" evidence="1">
    <location>
        <position position="345"/>
    </location>
</feature>
<feature type="glycosylation site" description="N-linked (GlcNAc...) asparagine" evidence="2">
    <location>
        <position position="293"/>
    </location>
</feature>
<feature type="glycosylation site" description="N-linked (GlcNAc...) asparagine" evidence="2">
    <location>
        <position position="312"/>
    </location>
</feature>
<feature type="disulfide bond" evidence="1">
    <location>
        <begin position="74"/>
        <end position="121"/>
    </location>
</feature>